<protein>
    <recommendedName>
        <fullName>Angiotensin</fullName>
    </recommendedName>
</protein>
<reference evidence="4" key="1">
    <citation type="journal article" date="1995" name="Neurosci. Lett.">
        <title>A comparison of the leech Theromyzon tessulatum angiotensin I-like molecule with forms of vertebrate angiotensinogens: a hormonal system conserved in the course of evolution.</title>
        <authorList>
            <person name="Laurent V."/>
            <person name="Bulet P."/>
            <person name="Salzet M."/>
        </authorList>
    </citation>
    <scope>PROTEIN SEQUENCE</scope>
</reference>
<reference evidence="4" key="2">
    <citation type="journal article" date="1996" name="FEBS Lett.">
        <title>Metabolism of angiotensins by head membranes of the leech Theromyzon tessulatum.</title>
        <authorList>
            <person name="Laurent V."/>
            <person name="Salzet M."/>
        </authorList>
    </citation>
    <scope>PROTEIN SEQUENCE OF 1-10</scope>
    <scope>FUNCTION</scope>
</reference>
<accession>Q10757</accession>
<proteinExistence type="evidence at protein level"/>
<organism>
    <name type="scientific">Theromyzon tessulatum</name>
    <name type="common">Duck leech</name>
    <dbReference type="NCBI Taxonomy" id="13286"/>
    <lineage>
        <taxon>Eukaryota</taxon>
        <taxon>Metazoa</taxon>
        <taxon>Spiralia</taxon>
        <taxon>Lophotrochozoa</taxon>
        <taxon>Annelida</taxon>
        <taxon>Clitellata</taxon>
        <taxon>Hirudinea</taxon>
        <taxon>Rhynchobdellida</taxon>
        <taxon>Glossiphoniidae</taxon>
        <taxon>Theromyzon</taxon>
    </lineage>
</organism>
<comment type="function">
    <text evidence="2">In leeches, the angiotensins are involved in diuresis.</text>
</comment>
<comment type="similarity">
    <text evidence="1">Belongs to the serpin family.</text>
</comment>
<sequence length="14" mass="1764">DRVYIHPFHLLXWG</sequence>
<keyword id="KW-0903">Direct protein sequencing</keyword>
<feature type="chain" id="PRO_0000238921" description="Angiotensin">
    <location>
        <begin position="1"/>
        <end position="14" status="greater than"/>
    </location>
</feature>
<feature type="non-terminal residue" evidence="3">
    <location>
        <position position="14"/>
    </location>
</feature>
<evidence type="ECO:0000255" key="1"/>
<evidence type="ECO:0000269" key="2">
    <source>
    </source>
</evidence>
<evidence type="ECO:0000303" key="3">
    <source>
    </source>
</evidence>
<evidence type="ECO:0000305" key="4"/>
<name>ANGT_THETS</name>